<dbReference type="EMBL" id="AY372243">
    <property type="protein sequence ID" value="AAQ73694.1"/>
    <property type="molecule type" value="Genomic_DNA"/>
</dbReference>
<dbReference type="RefSeq" id="NP_944388.1">
    <property type="nucleotide sequence ID" value="NC_005264.1"/>
</dbReference>
<dbReference type="GeneID" id="2656963"/>
<dbReference type="KEGG" id="vg:2656963"/>
<dbReference type="Proteomes" id="UP000006840">
    <property type="component" value="Segment"/>
</dbReference>
<dbReference type="GO" id="GO:0016020">
    <property type="term" value="C:membrane"/>
    <property type="evidence" value="ECO:0007669"/>
    <property type="project" value="UniProtKB-KW"/>
</dbReference>
<dbReference type="GO" id="GO:0019031">
    <property type="term" value="C:viral envelope"/>
    <property type="evidence" value="ECO:0007669"/>
    <property type="project" value="UniProtKB-KW"/>
</dbReference>
<dbReference type="GO" id="GO:0055036">
    <property type="term" value="C:virion membrane"/>
    <property type="evidence" value="ECO:0007669"/>
    <property type="project" value="UniProtKB-SubCell"/>
</dbReference>
<dbReference type="InterPro" id="IPR016187">
    <property type="entry name" value="CTDL_fold"/>
</dbReference>
<dbReference type="Pfam" id="PF05473">
    <property type="entry name" value="UL45"/>
    <property type="match status" value="1"/>
</dbReference>
<dbReference type="SUPFAM" id="SSF56436">
    <property type="entry name" value="C-type lectin-like"/>
    <property type="match status" value="1"/>
</dbReference>
<sequence>MRPNGARTQTAPPPAAAEGTADVHGNGEAATIQLDGQPSAPSPPLTTVFEATDDYKARRRNLESEPPFEVRAILDDELSDYPVAAPLDAVPQKHSCCCGVCLRRCAFVLTGMAVGMLLAAALLATIAAFAVPESVWTGGVCERGWVQHMGVCYKPGRTPPPSSAADGNFSAATFAGANTNCAAAGGSIVSSDQALSFLVLLSKTASGPNSAPPRGSWWTTHSGSCAIVHYAPSSTLEVYGNTSSLQSLALRTRDALDVSIAEDTQCSGSAGVMCAAAPAPPTALKYAQALRAILTLGVRAE</sequence>
<protein>
    <recommendedName>
        <fullName>Envelope protein UL45</fullName>
    </recommendedName>
</protein>
<gene>
    <name type="primary">UL45</name>
</gene>
<proteinExistence type="inferred from homology"/>
<reference key="1">
    <citation type="journal article" date="2006" name="J. Virol.">
        <title>Psittacid herpesvirus 1 and infectious laryngotracheitis virus: Comparative genome sequence analysis of two avian alphaherpesviruses.</title>
        <authorList>
            <person name="Thureen D.R."/>
            <person name="Keeler C.L. Jr."/>
        </authorList>
    </citation>
    <scope>NUCLEOTIDE SEQUENCE [LARGE SCALE GENOMIC DNA]</scope>
</reference>
<organismHost>
    <name type="scientific">Amazona oratrix</name>
    <name type="common">yellow-headed parrot</name>
    <dbReference type="NCBI Taxonomy" id="152276"/>
</organismHost>
<accession>Q6UDL6</accession>
<organism>
    <name type="scientific">Psittacid herpesvirus 1 (isolate Amazon parrot/-/97-0001/1997)</name>
    <name type="common">PsHV-1</name>
    <name type="synonym">Pacheco's disease virus</name>
    <dbReference type="NCBI Taxonomy" id="670426"/>
    <lineage>
        <taxon>Viruses</taxon>
        <taxon>Duplodnaviria</taxon>
        <taxon>Heunggongvirae</taxon>
        <taxon>Peploviricota</taxon>
        <taxon>Herviviricetes</taxon>
        <taxon>Herpesvirales</taxon>
        <taxon>Orthoherpesviridae</taxon>
        <taxon>Alphaherpesvirinae</taxon>
        <taxon>Iltovirus</taxon>
        <taxon>Iltovirus psittacidalpha1</taxon>
        <taxon>Psittacid alphaherpesvirus 1</taxon>
    </lineage>
</organism>
<evidence type="ECO:0000250" key="1"/>
<evidence type="ECO:0000255" key="2"/>
<evidence type="ECO:0000256" key="3">
    <source>
        <dbReference type="SAM" id="MobiDB-lite"/>
    </source>
</evidence>
<evidence type="ECO:0000305" key="4"/>
<keyword id="KW-0472">Membrane</keyword>
<keyword id="KW-1185">Reference proteome</keyword>
<keyword id="KW-0735">Signal-anchor</keyword>
<keyword id="KW-0812">Transmembrane</keyword>
<keyword id="KW-1133">Transmembrane helix</keyword>
<keyword id="KW-0261">Viral envelope protein</keyword>
<keyword id="KW-0946">Virion</keyword>
<name>EV45_PSHV1</name>
<feature type="chain" id="PRO_0000406812" description="Envelope protein UL45">
    <location>
        <begin position="1"/>
        <end position="301"/>
    </location>
</feature>
<feature type="topological domain" description="Intravirion" evidence="2">
    <location>
        <begin position="1"/>
        <end position="110"/>
    </location>
</feature>
<feature type="transmembrane region" description="Helical; Signal-anchor for type II membrane protein" evidence="2">
    <location>
        <begin position="111"/>
        <end position="131"/>
    </location>
</feature>
<feature type="topological domain" description="Virion surface" evidence="2">
    <location>
        <begin position="132"/>
        <end position="301"/>
    </location>
</feature>
<feature type="region of interest" description="Disordered" evidence="3">
    <location>
        <begin position="1"/>
        <end position="27"/>
    </location>
</feature>
<feature type="compositionally biased region" description="Low complexity" evidence="3">
    <location>
        <begin position="1"/>
        <end position="20"/>
    </location>
</feature>
<comment type="function">
    <text evidence="1">Seems to be required for glycoprotein B-induced fusion.</text>
</comment>
<comment type="subcellular location">
    <subcellularLocation>
        <location>Virion membrane</location>
        <topology>Single-pass type II membrane protein</topology>
    </subcellularLocation>
    <text evidence="1">In transfected cells, it is retained within the ER.</text>
</comment>
<comment type="similarity">
    <text evidence="4">Belongs to the herpesviridae HHV-1 UL45 family.</text>
</comment>